<dbReference type="EC" id="2.7.1.5" evidence="1"/>
<dbReference type="EMBL" id="FM242711">
    <property type="protein sequence ID" value="CAS06575.1"/>
    <property type="molecule type" value="Genomic_DNA"/>
</dbReference>
<dbReference type="RefSeq" id="WP_003725796.1">
    <property type="nucleotide sequence ID" value="NC_012488.1"/>
</dbReference>
<dbReference type="SMR" id="C1L0I2"/>
<dbReference type="KEGG" id="lmc:Lm4b_02821"/>
<dbReference type="HOGENOM" id="CLU_039395_0_1_9"/>
<dbReference type="UniPathway" id="UPA00541">
    <property type="reaction ID" value="UER00602"/>
</dbReference>
<dbReference type="GO" id="GO:0005829">
    <property type="term" value="C:cytosol"/>
    <property type="evidence" value="ECO:0007669"/>
    <property type="project" value="TreeGrafter"/>
</dbReference>
<dbReference type="GO" id="GO:0005524">
    <property type="term" value="F:ATP binding"/>
    <property type="evidence" value="ECO:0007669"/>
    <property type="project" value="UniProtKB-KW"/>
</dbReference>
<dbReference type="GO" id="GO:0004370">
    <property type="term" value="F:glycerol kinase activity"/>
    <property type="evidence" value="ECO:0007669"/>
    <property type="project" value="TreeGrafter"/>
</dbReference>
<dbReference type="GO" id="GO:0008993">
    <property type="term" value="F:rhamnulokinase activity"/>
    <property type="evidence" value="ECO:0007669"/>
    <property type="project" value="UniProtKB-UniRule"/>
</dbReference>
<dbReference type="GO" id="GO:0006071">
    <property type="term" value="P:glycerol metabolic process"/>
    <property type="evidence" value="ECO:0007669"/>
    <property type="project" value="TreeGrafter"/>
</dbReference>
<dbReference type="GO" id="GO:0019301">
    <property type="term" value="P:rhamnose catabolic process"/>
    <property type="evidence" value="ECO:0007669"/>
    <property type="project" value="UniProtKB-UniRule"/>
</dbReference>
<dbReference type="CDD" id="cd07771">
    <property type="entry name" value="ASKHA_NBD_FGGY_RhaB-like"/>
    <property type="match status" value="1"/>
</dbReference>
<dbReference type="FunFam" id="3.30.420.40:FF:000064">
    <property type="entry name" value="Rhamnulokinase"/>
    <property type="match status" value="1"/>
</dbReference>
<dbReference type="FunFam" id="3.30.420.40:FF:000268">
    <property type="entry name" value="Rhamnulokinase"/>
    <property type="match status" value="1"/>
</dbReference>
<dbReference type="Gene3D" id="3.30.420.40">
    <property type="match status" value="2"/>
</dbReference>
<dbReference type="HAMAP" id="MF_01535">
    <property type="entry name" value="Rhamnulokinase"/>
    <property type="match status" value="1"/>
</dbReference>
<dbReference type="InterPro" id="IPR043129">
    <property type="entry name" value="ATPase_NBD"/>
</dbReference>
<dbReference type="InterPro" id="IPR018485">
    <property type="entry name" value="FGGY_C"/>
</dbReference>
<dbReference type="InterPro" id="IPR018484">
    <property type="entry name" value="FGGY_N"/>
</dbReference>
<dbReference type="InterPro" id="IPR013449">
    <property type="entry name" value="Rhamnulokinase"/>
</dbReference>
<dbReference type="NCBIfam" id="TIGR02627">
    <property type="entry name" value="rhamnulo_kin"/>
    <property type="match status" value="1"/>
</dbReference>
<dbReference type="PANTHER" id="PTHR10196:SF93">
    <property type="entry name" value="L-RHAMNULOKINASE"/>
    <property type="match status" value="1"/>
</dbReference>
<dbReference type="PANTHER" id="PTHR10196">
    <property type="entry name" value="SUGAR KINASE"/>
    <property type="match status" value="1"/>
</dbReference>
<dbReference type="Pfam" id="PF02782">
    <property type="entry name" value="FGGY_C"/>
    <property type="match status" value="1"/>
</dbReference>
<dbReference type="Pfam" id="PF00370">
    <property type="entry name" value="FGGY_N"/>
    <property type="match status" value="1"/>
</dbReference>
<dbReference type="SUPFAM" id="SSF53067">
    <property type="entry name" value="Actin-like ATPase domain"/>
    <property type="match status" value="2"/>
</dbReference>
<sequence length="483" mass="54729">MKHYVAVDIGASSGRLILGKLVNEKLQLEEIHRFKNGFTYRDGHERWEIDQLMQEIFIGLEKVKQLGISECVLGIDTWGVDYVLIGASGEKLADPISYRDKRTLNAVQNLTSEYPREYIYKKTGIQFMELNTLYQLYVEERDLLERAEKILLIPDYIGYVLTGVKVAETTNSSTTQMLNLREQLFDKDLLSHLNIDVEKFAPLTDAGTYLGKVKEEWLEEYDIPNCDVVTVATHDTASAVVGTPAEGENWAFLSSGTWSLIGMELSAPINNEAAFKENYTNEWGAYGTYRFLKNIMGLWIVQEIARMDDYKHSFAEMAEEASNYPYFKQIINVNDARFNNPENMVDEIKLYCQETGQTIPETIGELTNCVYGSLALYYALELEKMTEITGKKIEKLYIVGGGSNVAMLNQLTAKLAGIEVFAGPSEATAIGNLVVQMINQGEIESMRAGRKIIRNSFEIGEFSCGDVRFEEIKERFTKVLEFN</sequence>
<feature type="chain" id="PRO_1000215407" description="Rhamnulokinase">
    <location>
        <begin position="1"/>
        <end position="483"/>
    </location>
</feature>
<feature type="active site" description="Proton acceptor" evidence="1">
    <location>
        <position position="235"/>
    </location>
</feature>
<feature type="binding site" evidence="1">
    <location>
        <begin position="11"/>
        <end position="15"/>
    </location>
    <ligand>
        <name>ATP</name>
        <dbReference type="ChEBI" id="CHEBI:30616"/>
    </ligand>
</feature>
<feature type="binding site" evidence="1">
    <location>
        <position position="79"/>
    </location>
    <ligand>
        <name>substrate</name>
    </ligand>
</feature>
<feature type="binding site" evidence="1">
    <location>
        <begin position="234"/>
        <end position="236"/>
    </location>
    <ligand>
        <name>substrate</name>
    </ligand>
</feature>
<feature type="binding site" evidence="1">
    <location>
        <position position="257"/>
    </location>
    <ligand>
        <name>ATP</name>
        <dbReference type="ChEBI" id="CHEBI:30616"/>
    </ligand>
</feature>
<feature type="binding site" evidence="1">
    <location>
        <position position="294"/>
    </location>
    <ligand>
        <name>substrate</name>
    </ligand>
</feature>
<feature type="binding site" evidence="1">
    <location>
        <position position="302"/>
    </location>
    <ligand>
        <name>ATP</name>
        <dbReference type="ChEBI" id="CHEBI:30616"/>
    </ligand>
</feature>
<feature type="binding site" evidence="1">
    <location>
        <position position="401"/>
    </location>
    <ligand>
        <name>ATP</name>
        <dbReference type="ChEBI" id="CHEBI:30616"/>
    </ligand>
</feature>
<feature type="disulfide bond" evidence="1">
    <location>
        <begin position="352"/>
        <end position="369"/>
    </location>
</feature>
<name>RHAB_LISMC</name>
<proteinExistence type="inferred from homology"/>
<accession>C1L0I2</accession>
<evidence type="ECO:0000255" key="1">
    <source>
        <dbReference type="HAMAP-Rule" id="MF_01535"/>
    </source>
</evidence>
<comment type="function">
    <text evidence="1">Involved in the catabolism of L-rhamnose (6-deoxy-L-mannose). Catalyzes the transfer of the gamma-phosphate group from ATP to the 1-hydroxyl group of L-rhamnulose to yield L-rhamnulose 1-phosphate.</text>
</comment>
<comment type="catalytic activity">
    <reaction evidence="1">
        <text>L-rhamnulose + ATP = L-rhamnulose 1-phosphate + ADP + H(+)</text>
        <dbReference type="Rhea" id="RHEA:20117"/>
        <dbReference type="ChEBI" id="CHEBI:15378"/>
        <dbReference type="ChEBI" id="CHEBI:17897"/>
        <dbReference type="ChEBI" id="CHEBI:30616"/>
        <dbReference type="ChEBI" id="CHEBI:58313"/>
        <dbReference type="ChEBI" id="CHEBI:456216"/>
        <dbReference type="EC" id="2.7.1.5"/>
    </reaction>
</comment>
<comment type="cofactor">
    <cofactor evidence="1">
        <name>Mg(2+)</name>
        <dbReference type="ChEBI" id="CHEBI:18420"/>
    </cofactor>
</comment>
<comment type="pathway">
    <text evidence="1">Carbohydrate degradation; L-rhamnose degradation; glycerone phosphate from L-rhamnose: step 2/3.</text>
</comment>
<comment type="similarity">
    <text evidence="1">Belongs to the rhamnulokinase family.</text>
</comment>
<gene>
    <name evidence="1" type="primary">rhaB</name>
    <name type="ordered locus">Lm4b_02821</name>
</gene>
<organism>
    <name type="scientific">Listeria monocytogenes serotype 4b (strain CLIP80459)</name>
    <dbReference type="NCBI Taxonomy" id="568819"/>
    <lineage>
        <taxon>Bacteria</taxon>
        <taxon>Bacillati</taxon>
        <taxon>Bacillota</taxon>
        <taxon>Bacilli</taxon>
        <taxon>Bacillales</taxon>
        <taxon>Listeriaceae</taxon>
        <taxon>Listeria</taxon>
    </lineage>
</organism>
<protein>
    <recommendedName>
        <fullName evidence="1">Rhamnulokinase</fullName>
        <shortName evidence="1">RhaB</shortName>
        <ecNumber evidence="1">2.7.1.5</ecNumber>
    </recommendedName>
    <alternativeName>
        <fullName evidence="1">ATP:L-rhamnulose phosphotransferase</fullName>
    </alternativeName>
    <alternativeName>
        <fullName evidence="1">L-rhamnulose 1-kinase</fullName>
    </alternativeName>
    <alternativeName>
        <fullName evidence="1">Rhamnulose kinase</fullName>
    </alternativeName>
</protein>
<keyword id="KW-0067">ATP-binding</keyword>
<keyword id="KW-1015">Disulfide bond</keyword>
<keyword id="KW-0418">Kinase</keyword>
<keyword id="KW-0460">Magnesium</keyword>
<keyword id="KW-0547">Nucleotide-binding</keyword>
<keyword id="KW-0684">Rhamnose metabolism</keyword>
<keyword id="KW-0808">Transferase</keyword>
<reference key="1">
    <citation type="journal article" date="2012" name="BMC Genomics">
        <title>Comparative genomics and transcriptomics of lineages I, II, and III strains of Listeria monocytogenes.</title>
        <authorList>
            <person name="Hain T."/>
            <person name="Ghai R."/>
            <person name="Billion A."/>
            <person name="Kuenne C.T."/>
            <person name="Steinweg C."/>
            <person name="Izar B."/>
            <person name="Mohamed W."/>
            <person name="Mraheil M."/>
            <person name="Domann E."/>
            <person name="Schaffrath S."/>
            <person name="Karst U."/>
            <person name="Goesmann A."/>
            <person name="Oehm S."/>
            <person name="Puhler A."/>
            <person name="Merkl R."/>
            <person name="Vorwerk S."/>
            <person name="Glaser P."/>
            <person name="Garrido P."/>
            <person name="Rusniok C."/>
            <person name="Buchrieser C."/>
            <person name="Goebel W."/>
            <person name="Chakraborty T."/>
        </authorList>
    </citation>
    <scope>NUCLEOTIDE SEQUENCE [LARGE SCALE GENOMIC DNA]</scope>
    <source>
        <strain>CLIP80459</strain>
    </source>
</reference>